<feature type="chain" id="PRO_0000134194" description="Small ribosomal subunit protein uS2">
    <location>
        <begin position="1"/>
        <end position="266"/>
    </location>
</feature>
<feature type="region of interest" description="Disordered" evidence="2">
    <location>
        <begin position="247"/>
        <end position="266"/>
    </location>
</feature>
<feature type="compositionally biased region" description="Polar residues" evidence="2">
    <location>
        <begin position="249"/>
        <end position="258"/>
    </location>
</feature>
<protein>
    <recommendedName>
        <fullName evidence="1">Small ribosomal subunit protein uS2</fullName>
    </recommendedName>
    <alternativeName>
        <fullName evidence="3">30S ribosomal protein S2</fullName>
    </alternativeName>
</protein>
<keyword id="KW-1185">Reference proteome</keyword>
<keyword id="KW-0687">Ribonucleoprotein</keyword>
<keyword id="KW-0689">Ribosomal protein</keyword>
<sequence length="266" mass="29743">MAYKEVTRDELSAAGVQYGHQTKRWNPKMAPFIYGSKSKNHVIDLEKTLIQLRQAEKLVQSIGAKGEKVLFVGTRRSAKLAVKEAALRSGNYYVNQRWLGGTLTNFKTIVKRIKALWEIEESEKNGQLALRTKKEQILILKEKANLEKSLGGIKQMRKLPAALIVVDPKSDEIAVKEAIKLNIPVIGLCDTNVDPDIVTLPIPANDDLQESVNIMINALVDAFADGANLKLAPSVLKTVVVKRERTEGENNYSNNRSWNKPERTNN</sequence>
<dbReference type="EMBL" id="AE017263">
    <property type="protein sequence ID" value="AAT75919.1"/>
    <property type="status" value="ALT_INIT"/>
    <property type="molecule type" value="Genomic_DNA"/>
</dbReference>
<dbReference type="RefSeq" id="WP_023026095.1">
    <property type="nucleotide sequence ID" value="NC_006055.1"/>
</dbReference>
<dbReference type="RefSeq" id="YP_053803.1">
    <property type="nucleotide sequence ID" value="NC_006055.1"/>
</dbReference>
<dbReference type="SMR" id="Q6F0Q4"/>
<dbReference type="STRING" id="265311.Mfl561"/>
<dbReference type="PaxDb" id="265311-Mfl561"/>
<dbReference type="EnsemblBacteria" id="AAT75919">
    <property type="protein sequence ID" value="AAT75919"/>
    <property type="gene ID" value="Mfl561"/>
</dbReference>
<dbReference type="GeneID" id="2897732"/>
<dbReference type="KEGG" id="mfl:Mfl561"/>
<dbReference type="PATRIC" id="fig|265311.5.peg.565"/>
<dbReference type="eggNOG" id="COG0052">
    <property type="taxonomic scope" value="Bacteria"/>
</dbReference>
<dbReference type="HOGENOM" id="CLU_040318_0_1_14"/>
<dbReference type="OrthoDB" id="9808036at2"/>
<dbReference type="Proteomes" id="UP000006647">
    <property type="component" value="Chromosome"/>
</dbReference>
<dbReference type="GO" id="GO:0015935">
    <property type="term" value="C:small ribosomal subunit"/>
    <property type="evidence" value="ECO:0007669"/>
    <property type="project" value="InterPro"/>
</dbReference>
<dbReference type="GO" id="GO:0003735">
    <property type="term" value="F:structural constituent of ribosome"/>
    <property type="evidence" value="ECO:0007669"/>
    <property type="project" value="InterPro"/>
</dbReference>
<dbReference type="GO" id="GO:0006412">
    <property type="term" value="P:translation"/>
    <property type="evidence" value="ECO:0007669"/>
    <property type="project" value="UniProtKB-UniRule"/>
</dbReference>
<dbReference type="CDD" id="cd01425">
    <property type="entry name" value="RPS2"/>
    <property type="match status" value="1"/>
</dbReference>
<dbReference type="Gene3D" id="3.40.50.10490">
    <property type="entry name" value="Glucose-6-phosphate isomerase like protein, domain 1"/>
    <property type="match status" value="1"/>
</dbReference>
<dbReference type="Gene3D" id="1.10.287.610">
    <property type="entry name" value="Helix hairpin bin"/>
    <property type="match status" value="1"/>
</dbReference>
<dbReference type="HAMAP" id="MF_00291_B">
    <property type="entry name" value="Ribosomal_uS2_B"/>
    <property type="match status" value="1"/>
</dbReference>
<dbReference type="InterPro" id="IPR001865">
    <property type="entry name" value="Ribosomal_uS2"/>
</dbReference>
<dbReference type="InterPro" id="IPR005706">
    <property type="entry name" value="Ribosomal_uS2_bac/mit/plastid"/>
</dbReference>
<dbReference type="InterPro" id="IPR018130">
    <property type="entry name" value="Ribosomal_uS2_CS"/>
</dbReference>
<dbReference type="InterPro" id="IPR023591">
    <property type="entry name" value="Ribosomal_uS2_flav_dom_sf"/>
</dbReference>
<dbReference type="NCBIfam" id="TIGR01011">
    <property type="entry name" value="rpsB_bact"/>
    <property type="match status" value="1"/>
</dbReference>
<dbReference type="PANTHER" id="PTHR12534">
    <property type="entry name" value="30S RIBOSOMAL PROTEIN S2 PROKARYOTIC AND ORGANELLAR"/>
    <property type="match status" value="1"/>
</dbReference>
<dbReference type="PANTHER" id="PTHR12534:SF0">
    <property type="entry name" value="SMALL RIBOSOMAL SUBUNIT PROTEIN US2M"/>
    <property type="match status" value="1"/>
</dbReference>
<dbReference type="Pfam" id="PF00318">
    <property type="entry name" value="Ribosomal_S2"/>
    <property type="match status" value="1"/>
</dbReference>
<dbReference type="PRINTS" id="PR00395">
    <property type="entry name" value="RIBOSOMALS2"/>
</dbReference>
<dbReference type="SUPFAM" id="SSF52313">
    <property type="entry name" value="Ribosomal protein S2"/>
    <property type="match status" value="1"/>
</dbReference>
<dbReference type="PROSITE" id="PS00963">
    <property type="entry name" value="RIBOSOMAL_S2_2"/>
    <property type="match status" value="1"/>
</dbReference>
<name>RS2_MESFL</name>
<accession>Q6F0Q4</accession>
<organism>
    <name type="scientific">Mesoplasma florum (strain ATCC 33453 / NBRC 100688 / NCTC 11704 / L1)</name>
    <name type="common">Acholeplasma florum</name>
    <dbReference type="NCBI Taxonomy" id="265311"/>
    <lineage>
        <taxon>Bacteria</taxon>
        <taxon>Bacillati</taxon>
        <taxon>Mycoplasmatota</taxon>
        <taxon>Mollicutes</taxon>
        <taxon>Entomoplasmatales</taxon>
        <taxon>Entomoplasmataceae</taxon>
        <taxon>Mesoplasma</taxon>
    </lineage>
</organism>
<comment type="similarity">
    <text evidence="1">Belongs to the universal ribosomal protein uS2 family.</text>
</comment>
<comment type="sequence caution" evidence="3">
    <conflict type="erroneous initiation">
        <sequence resource="EMBL-CDS" id="AAT75919"/>
    </conflict>
</comment>
<proteinExistence type="inferred from homology"/>
<reference key="1">
    <citation type="submission" date="2004-06" db="EMBL/GenBank/DDBJ databases">
        <authorList>
            <person name="Birren B.W."/>
            <person name="Stange-Thomann N."/>
            <person name="Hafez N."/>
            <person name="DeCaprio D."/>
            <person name="Fisher S."/>
            <person name="Butler J."/>
            <person name="Elkins T."/>
            <person name="Kodira C.D."/>
            <person name="Major J."/>
            <person name="Wang S."/>
            <person name="Nicol R."/>
            <person name="Nusbaum C."/>
        </authorList>
    </citation>
    <scope>NUCLEOTIDE SEQUENCE [LARGE SCALE GENOMIC DNA]</scope>
    <source>
        <strain>ATCC 33453 / NBRC 100688 / NCTC 11704 / L1</strain>
    </source>
</reference>
<evidence type="ECO:0000255" key="1">
    <source>
        <dbReference type="HAMAP-Rule" id="MF_00291"/>
    </source>
</evidence>
<evidence type="ECO:0000256" key="2">
    <source>
        <dbReference type="SAM" id="MobiDB-lite"/>
    </source>
</evidence>
<evidence type="ECO:0000305" key="3"/>
<gene>
    <name evidence="1" type="primary">rpsB</name>
    <name type="ordered locus">Mfl561</name>
</gene>